<keyword id="KW-0046">Antibiotic resistance</keyword>
<keyword id="KW-0378">Hydrolase</keyword>
<keyword id="KW-0574">Periplasm</keyword>
<keyword id="KW-0732">Signal</keyword>
<gene>
    <name type="primary">ampC</name>
</gene>
<protein>
    <recommendedName>
        <fullName>Beta-lactamase</fullName>
        <ecNumber>3.5.2.6</ecNumber>
    </recommendedName>
    <alternativeName>
        <fullName>Cephalosporinase</fullName>
    </alternativeName>
</protein>
<accession>O69773</accession>
<evidence type="ECO:0000250" key="1"/>
<evidence type="ECO:0000255" key="2"/>
<evidence type="ECO:0000255" key="3">
    <source>
        <dbReference type="PROSITE-ProRule" id="PRU10102"/>
    </source>
</evidence>
<evidence type="ECO:0000305" key="4"/>
<evidence type="ECO:0000305" key="5">
    <source>
    </source>
</evidence>
<organism>
    <name type="scientific">Providencia stuartii</name>
    <dbReference type="NCBI Taxonomy" id="588"/>
    <lineage>
        <taxon>Bacteria</taxon>
        <taxon>Pseudomonadati</taxon>
        <taxon>Pseudomonadota</taxon>
        <taxon>Gammaproteobacteria</taxon>
        <taxon>Enterobacterales</taxon>
        <taxon>Morganellaceae</taxon>
        <taxon>Providencia</taxon>
    </lineage>
</organism>
<dbReference type="EC" id="3.5.2.6"/>
<dbReference type="EMBL" id="Y17315">
    <property type="protein sequence ID" value="CAA76739.1"/>
    <property type="molecule type" value="Genomic_DNA"/>
</dbReference>
<dbReference type="RefSeq" id="WP_040132692.1">
    <property type="nucleotide sequence ID" value="NZ_BRUT01000007.1"/>
</dbReference>
<dbReference type="SMR" id="O69773"/>
<dbReference type="STRING" id="588.BGK56_12160"/>
<dbReference type="ChEMBL" id="CHEMBL5895"/>
<dbReference type="MEROPS" id="S12.006"/>
<dbReference type="GO" id="GO:0030288">
    <property type="term" value="C:outer membrane-bounded periplasmic space"/>
    <property type="evidence" value="ECO:0007669"/>
    <property type="project" value="InterPro"/>
</dbReference>
<dbReference type="GO" id="GO:0008800">
    <property type="term" value="F:beta-lactamase activity"/>
    <property type="evidence" value="ECO:0007669"/>
    <property type="project" value="UniProtKB-EC"/>
</dbReference>
<dbReference type="GO" id="GO:0017001">
    <property type="term" value="P:antibiotic catabolic process"/>
    <property type="evidence" value="ECO:0007669"/>
    <property type="project" value="InterPro"/>
</dbReference>
<dbReference type="GO" id="GO:0046677">
    <property type="term" value="P:response to antibiotic"/>
    <property type="evidence" value="ECO:0007669"/>
    <property type="project" value="UniProtKB-KW"/>
</dbReference>
<dbReference type="Gene3D" id="3.40.710.10">
    <property type="entry name" value="DD-peptidase/beta-lactamase superfamily"/>
    <property type="match status" value="1"/>
</dbReference>
<dbReference type="InterPro" id="IPR050491">
    <property type="entry name" value="Bact_CellWall_Synth/Modif"/>
</dbReference>
<dbReference type="InterPro" id="IPR001466">
    <property type="entry name" value="Beta-lactam-related"/>
</dbReference>
<dbReference type="InterPro" id="IPR012338">
    <property type="entry name" value="Beta-lactam/transpept-like"/>
</dbReference>
<dbReference type="InterPro" id="IPR001586">
    <property type="entry name" value="Beta-lactam_class-C_AS"/>
</dbReference>
<dbReference type="NCBIfam" id="NF033085">
    <property type="entry name" value="bla_class_C"/>
    <property type="match status" value="1"/>
</dbReference>
<dbReference type="PANTHER" id="PTHR46825:SF8">
    <property type="entry name" value="BETA-LACTAMASE-RELATED"/>
    <property type="match status" value="1"/>
</dbReference>
<dbReference type="PANTHER" id="PTHR46825">
    <property type="entry name" value="D-ALANYL-D-ALANINE-CARBOXYPEPTIDASE/ENDOPEPTIDASE AMPH"/>
    <property type="match status" value="1"/>
</dbReference>
<dbReference type="Pfam" id="PF00144">
    <property type="entry name" value="Beta-lactamase"/>
    <property type="match status" value="1"/>
</dbReference>
<dbReference type="SUPFAM" id="SSF56601">
    <property type="entry name" value="beta-lactamase/transpeptidase-like"/>
    <property type="match status" value="1"/>
</dbReference>
<dbReference type="PROSITE" id="PS00336">
    <property type="entry name" value="BETA_LACTAMASE_C"/>
    <property type="match status" value="1"/>
</dbReference>
<comment type="function">
    <text>This protein is a serine beta-lactamase with a substrate specificity for cephalosporins.</text>
</comment>
<comment type="catalytic activity">
    <reaction evidence="3">
        <text>a beta-lactam + H2O = a substituted beta-amino acid</text>
        <dbReference type="Rhea" id="RHEA:20401"/>
        <dbReference type="ChEBI" id="CHEBI:15377"/>
        <dbReference type="ChEBI" id="CHEBI:35627"/>
        <dbReference type="ChEBI" id="CHEBI:140347"/>
        <dbReference type="EC" id="3.5.2.6"/>
    </reaction>
</comment>
<comment type="subcellular location">
    <subcellularLocation>
        <location evidence="1">Periplasm</location>
    </subcellularLocation>
</comment>
<comment type="miscellaneous">
    <text evidence="5">The class C beta-lactamase family has a specific amino-acid numbering system known as SANC, for structural alignment-based numbering of class C beta-lactamases, or else the simpler name structural position. A multiple sequence alignment was used to derive a consensus sequence and then the consensus was numbered taking into account insertions and deletions. This allows use of identical numbers, e.g. for active site residues, despite differences in protein length. UniProt always uses natural numbering of residues, hence there appear to be differences in numbering between this entry and some papers.</text>
</comment>
<comment type="similarity">
    <text evidence="4">Belongs to the class-C beta-lactamase family.</text>
</comment>
<reference key="1">
    <citation type="submission" date="1998-05" db="EMBL/GenBank/DDBJ databases">
        <title>Cloning and sequencing of ampC and ampR genes from Providencia stuartii.</title>
        <authorList>
            <person name="Koeck J.L."/>
            <person name="Basmaciogullari S."/>
            <person name="Parzy D."/>
            <person name="Barnaud G."/>
            <person name="Teyssou R."/>
            <person name="Buisson Y."/>
            <person name="Philippon A."/>
            <person name="Arlet G.J."/>
        </authorList>
    </citation>
    <scope>NUCLEOTIDE SEQUENCE [GENOMIC DNA]</scope>
    <source>
        <strain>VDG 96</strain>
    </source>
</reference>
<reference key="2">
    <citation type="journal article" date="2020" name="Antimicrob. Agents Chemother.">
        <title>A Standard Numbering Scheme for Class C beta-Lactamases.</title>
        <authorList>
            <person name="Mack A.R."/>
            <person name="Barnes M.D."/>
            <person name="Taracila M.A."/>
            <person name="Hujer A.M."/>
            <person name="Hujer K.M."/>
            <person name="Cabot G."/>
            <person name="Feldgarden M."/>
            <person name="Haft D.H."/>
            <person name="Klimke W."/>
            <person name="van den Akker F."/>
            <person name="Vila A.J."/>
            <person name="Smania A."/>
            <person name="Haider S."/>
            <person name="Papp-Wallace K.M."/>
            <person name="Bradford P.A."/>
            <person name="Rossolini G.M."/>
            <person name="Docquier J.D."/>
            <person name="Frere J.M."/>
            <person name="Galleni M."/>
            <person name="Hanson N.D."/>
            <person name="Oliver A."/>
            <person name="Plesiat P."/>
            <person name="Poirel L."/>
            <person name="Nordmann P."/>
            <person name="Palzkill T.G."/>
            <person name="Jacoby G.A."/>
            <person name="Bush K."/>
            <person name="Bonomo R.A."/>
        </authorList>
    </citation>
    <scope>AMINO ACID NUMBERING SCHEME</scope>
</reference>
<proteinExistence type="inferred from homology"/>
<feature type="signal peptide" evidence="2">
    <location>
        <begin position="1"/>
        <end position="29"/>
    </location>
</feature>
<feature type="chain" id="PRO_0000016962" description="Beta-lactamase">
    <location>
        <begin position="30"/>
        <end position="384"/>
    </location>
</feature>
<feature type="active site" description="Acyl-ester intermediate" evidence="3">
    <location>
        <position position="87"/>
    </location>
</feature>
<feature type="active site" description="Proton acceptor" evidence="1">
    <location>
        <position position="172"/>
    </location>
</feature>
<feature type="binding site" evidence="1">
    <location>
        <begin position="337"/>
        <end position="339"/>
    </location>
    <ligand>
        <name>substrate</name>
    </ligand>
</feature>
<name>AMPC_PROST</name>
<sequence>MDNSMKNIFRQGRLFIALSLAMTSISAFALTQQEVDDIIKPLMKQEQIPGMSVAISVNGKQAIYHYGVQSKQTQIPVSDRTLYEIGSLSKTFTATLATYAQIQGKLDFSQSVSHYLPELKGSAFDNVSVMNLATHTSGLSLFVPSDIKTNDQLMAYYQKWLPDNEVGQYRSYSNLGVGLLGIVTAKQLNMPFSQAMEKLMLPSLGLKHTYIHVPKSQEKYYAQGYNKQNQPVRLNLEILGPEAYGLKSNAKDLIRYLEINMQSIKVAKTWQEAIENTHTGVYLTDSFVQDMMWESYPWPVSLSQLLQGNRDDMALKPQKVELIKPAMAPEVRAYYNKTGSSNGFATYAIFIPEEKIAIVMLSNKWIPIPQRITATYQLLEKIER</sequence>